<comment type="function">
    <text evidence="7 10 17">Multifunctional cytochrome P450 monooxygenase; part of the gene cluster that mediates the biosynthesis of fumagillin, a meroterpenoid that has numerous biological activities including irreversible inhibition of human type 2 methionine aminopeptidase (METAP2) (PubMed:23488861, PubMed:24568283). Within the pathway, the multifunctional cytochrome P450 monooxygenase af510 acts as a 2,4,6-trichlorophenol monooxygenase that first performs the C-H hydroxylation at the bridgehead C5 position to yield 5R-hydroxyl-beta-trans-bergamotene (PubMed:24568283). Subsequently, a four electron oxidation initiated at C-9 coupled to cleavage of the cyclobutane C5-C8 bond of the bicyclo[3.1.1] core yields the epoxyketone intermediate 5-keto-cordycol (PubMed:24568283). An additional epoxidation reaction also catalyzed by af510 then furnishes the characteristic bisepoxide ketone 5-keto-demethoxyfumagillol (PubMed:24568283). The pathway begins with the conversion of farnesyl pyrophosphate (FPP) to beta-trans-bergamotene by the membrane-bound beta-trans-bergamotene synthase af520. The multifunctional cytochrome P450 monooxygenase af510 then converts beta-trans-bergamotene into 5-keto-demethoxyfumagillol via several oxydation steps. 5-keto-demethoxyfumagillol is then subjected to successive C-6 hydroxylation and O-methylation by the dioxygenase af480 and O-methyltransferase af390-400, respectively, to yield 5-keto-fumagillol, which is then stereoselectively reduced by the keto-reductase af490 to 5R-hydroxy-seco-sesquiterpene. The next step is the polyketide transferase af380-catalyzed transfer of a dodecapentaenoyl group synthesized by the polyketide synthase af370 onto 5R-hydroxy-seco-sesquiterpene which leads to the production of prefumagillin. Finally, oxidative cleavage by the monooxygenase af470 converts prefumagillin to fumagillin (Probable) (PubMed:24568283).</text>
</comment>
<comment type="catalytic activity">
    <reaction evidence="10">
        <text>(+)-exo-beta-bergamotene + 2 reduced [NADPH--hemoprotein reductase] + 3 O2 = 5-dehydro-6-demethoxyfumagillol + 2 oxidized [NADPH--hemoprotein reductase] + 3 H2O + 2 H(+)</text>
        <dbReference type="Rhea" id="RHEA:74591"/>
        <dbReference type="Rhea" id="RHEA-COMP:11964"/>
        <dbReference type="Rhea" id="RHEA-COMP:11965"/>
        <dbReference type="ChEBI" id="CHEBI:15377"/>
        <dbReference type="ChEBI" id="CHEBI:15378"/>
        <dbReference type="ChEBI" id="CHEBI:15379"/>
        <dbReference type="ChEBI" id="CHEBI:57618"/>
        <dbReference type="ChEBI" id="CHEBI:58210"/>
        <dbReference type="ChEBI" id="CHEBI:193166"/>
        <dbReference type="ChEBI" id="CHEBI:193517"/>
        <dbReference type="EC" id="1.14.14.184"/>
    </reaction>
    <physiologicalReaction direction="left-to-right" evidence="10">
        <dbReference type="Rhea" id="RHEA:74592"/>
    </physiologicalReaction>
</comment>
<comment type="cofactor">
    <cofactor evidence="1">
        <name>heme</name>
        <dbReference type="ChEBI" id="CHEBI:30413"/>
    </cofactor>
</comment>
<comment type="pathway">
    <text evidence="10">Secondary metabolite biosynthesis; terpenoid biosynthesis.</text>
</comment>
<comment type="subcellular location">
    <subcellularLocation>
        <location evidence="2">Membrane</location>
        <topology evidence="2">Single-pass membrane protein</topology>
    </subcellularLocation>
</comment>
<comment type="induction">
    <text evidence="8 9 11">Expression is controlled by the fumagillin biosynthesis cluster regulator fumR (PubMed:24082142). Expression is also under the control of the developmental and secondary metabolism regulator veA (PubMed:24116213). Expression is significantly up-regulated during infection (PubMed:30251593).</text>
</comment>
<comment type="disruption phenotype">
    <text evidence="8 10">Completely abolishes the production of fumagillin but leads to the accumulation of the intermediate beta-trans-bergamotene (PubMed:24082142, PubMed:24568283).</text>
</comment>
<comment type="biotechnology">
    <text evidence="4 5 6 12">Fumagillin and its derivatives have been intensely studied for their potential use in the treatment of amebiasis, microsporidiosis and rheumatoid arthritis (PubMed:12075057, PubMed:14913169, PubMed:18209961). They have also interesting antiangiogenic properties by the irreversible inhibition of human type 2 methionine aminopeptidase (METAP2) (PubMed:9177176).</text>
</comment>
<comment type="similarity">
    <text evidence="16">Belongs to the cytochrome P450 family.</text>
</comment>
<protein>
    <recommendedName>
        <fullName evidence="15">Multifunctional cytochrome P450 monooxygenase af510</fullName>
        <ecNumber evidence="10">1.14.14.184</ecNumber>
    </recommendedName>
    <alternativeName>
        <fullName evidence="16">2,4,6-trichlorophenol monooxygenase</fullName>
    </alternativeName>
    <alternativeName>
        <fullName evidence="15">Fumagillin biosynthesis cluster P450 monooxygenase</fullName>
        <shortName evidence="15">Fma-P450</shortName>
    </alternativeName>
</protein>
<sequence length="536" mass="60965">MAYELSTLQLSCVAFVAFMAVLVFRTRTRNLKQNVPPGPRPLPIIGNFFDLPPKGQPEYLHWFKHKDAYGPVSSINVMGTTLVIFHDKDAAHAVMGKKAQKTSARPQLNFAQLCGFENFLITHQYNDKYRLHRKMVHQEIGTKGLSAGFRPIQEQESIRFILQTFNRPDDILQHLKTLAAAIVLKITYGYSIERKGQDPLVELIEHAMENLSQAFVPLAWAVDSVPAIKYLPDWFPGMSYRKTARKWRAINEAAAELPYDFVKRQMAHKAHQPSYVSNLLEKHMIKSEDNKINVSAADEEAIKWTAVSLYAAGSDSTVAIIHSVICGLVMFPEVVTRAQEEIDRVVGSDRLPNFDDRTNLPYVDGIIKEAWRWNPVGPMGLTHKSEEDLVCGEYLIPKGSYLLPSLWWFLNDPKEYPEPRVFKPERYMEPFNHPDPSEIAFGYGRRSCAGRYFADASVYITVVQLLAVFNVRKARDDQGNEIPVTLQAIPGMVNRPAPFQFKVEPRSQHHIDLLRRIESEQIPEVSHASLLKPSTV</sequence>
<dbReference type="EC" id="1.14.14.184" evidence="10"/>
<dbReference type="EMBL" id="AAHF01000014">
    <property type="protein sequence ID" value="EAL85116.1"/>
    <property type="molecule type" value="Genomic_DNA"/>
</dbReference>
<dbReference type="RefSeq" id="XP_747154.1">
    <property type="nucleotide sequence ID" value="XM_742061.1"/>
</dbReference>
<dbReference type="SMR" id="Q4WAZ6"/>
<dbReference type="STRING" id="330879.Q4WAZ6"/>
<dbReference type="GlyCosmos" id="Q4WAZ6">
    <property type="glycosylation" value="2 sites, No reported glycans"/>
</dbReference>
<dbReference type="EnsemblFungi" id="EAL85116">
    <property type="protein sequence ID" value="EAL85116"/>
    <property type="gene ID" value="AFUA_8G00510"/>
</dbReference>
<dbReference type="GeneID" id="3504542"/>
<dbReference type="KEGG" id="afm:AFUA_8G00510"/>
<dbReference type="VEuPathDB" id="FungiDB:Afu8g00510"/>
<dbReference type="eggNOG" id="KOG0156">
    <property type="taxonomic scope" value="Eukaryota"/>
</dbReference>
<dbReference type="HOGENOM" id="CLU_001570_2_3_1"/>
<dbReference type="InParanoid" id="Q4WAZ6"/>
<dbReference type="OMA" id="SEFRDTQ"/>
<dbReference type="OrthoDB" id="2789670at2759"/>
<dbReference type="BioCyc" id="MetaCyc:MONOMER-124253"/>
<dbReference type="UniPathway" id="UPA00213"/>
<dbReference type="Proteomes" id="UP000002530">
    <property type="component" value="Chromosome 8"/>
</dbReference>
<dbReference type="GO" id="GO:0016020">
    <property type="term" value="C:membrane"/>
    <property type="evidence" value="ECO:0007669"/>
    <property type="project" value="UniProtKB-SubCell"/>
</dbReference>
<dbReference type="GO" id="GO:0020037">
    <property type="term" value="F:heme binding"/>
    <property type="evidence" value="ECO:0007669"/>
    <property type="project" value="InterPro"/>
</dbReference>
<dbReference type="GO" id="GO:0005506">
    <property type="term" value="F:iron ion binding"/>
    <property type="evidence" value="ECO:0007669"/>
    <property type="project" value="InterPro"/>
</dbReference>
<dbReference type="GO" id="GO:0004497">
    <property type="term" value="F:monooxygenase activity"/>
    <property type="evidence" value="ECO:0007669"/>
    <property type="project" value="UniProtKB-KW"/>
</dbReference>
<dbReference type="GO" id="GO:0016705">
    <property type="term" value="F:oxidoreductase activity, acting on paired donors, with incorporation or reduction of molecular oxygen"/>
    <property type="evidence" value="ECO:0007669"/>
    <property type="project" value="InterPro"/>
</dbReference>
<dbReference type="GO" id="GO:1902086">
    <property type="term" value="P:fumagillin biosynthetic process"/>
    <property type="evidence" value="ECO:0000317"/>
    <property type="project" value="AspGD"/>
</dbReference>
<dbReference type="GO" id="GO:0016114">
    <property type="term" value="P:terpenoid biosynthetic process"/>
    <property type="evidence" value="ECO:0007669"/>
    <property type="project" value="UniProtKB-UniPathway"/>
</dbReference>
<dbReference type="CDD" id="cd11065">
    <property type="entry name" value="CYP64-like"/>
    <property type="match status" value="1"/>
</dbReference>
<dbReference type="FunFam" id="1.10.630.10:FF:000229">
    <property type="entry name" value="Cytochrome P450 oxidoreductase OrdA-like, putative"/>
    <property type="match status" value="1"/>
</dbReference>
<dbReference type="Gene3D" id="1.10.630.10">
    <property type="entry name" value="Cytochrome P450"/>
    <property type="match status" value="1"/>
</dbReference>
<dbReference type="InterPro" id="IPR001128">
    <property type="entry name" value="Cyt_P450"/>
</dbReference>
<dbReference type="InterPro" id="IPR017972">
    <property type="entry name" value="Cyt_P450_CS"/>
</dbReference>
<dbReference type="InterPro" id="IPR002401">
    <property type="entry name" value="Cyt_P450_E_grp-I"/>
</dbReference>
<dbReference type="InterPro" id="IPR036396">
    <property type="entry name" value="Cyt_P450_sf"/>
</dbReference>
<dbReference type="InterPro" id="IPR050364">
    <property type="entry name" value="Cytochrome_P450_fung"/>
</dbReference>
<dbReference type="PANTHER" id="PTHR46300:SF7">
    <property type="entry name" value="P450, PUTATIVE (EUROFUNG)-RELATED"/>
    <property type="match status" value="1"/>
</dbReference>
<dbReference type="PANTHER" id="PTHR46300">
    <property type="entry name" value="P450, PUTATIVE (EUROFUNG)-RELATED-RELATED"/>
    <property type="match status" value="1"/>
</dbReference>
<dbReference type="Pfam" id="PF00067">
    <property type="entry name" value="p450"/>
    <property type="match status" value="1"/>
</dbReference>
<dbReference type="PRINTS" id="PR00463">
    <property type="entry name" value="EP450I"/>
</dbReference>
<dbReference type="SUPFAM" id="SSF48264">
    <property type="entry name" value="Cytochrome P450"/>
    <property type="match status" value="1"/>
</dbReference>
<dbReference type="PROSITE" id="PS00086">
    <property type="entry name" value="CYTOCHROME_P450"/>
    <property type="match status" value="1"/>
</dbReference>
<evidence type="ECO:0000250" key="1">
    <source>
        <dbReference type="UniProtKB" id="P04798"/>
    </source>
</evidence>
<evidence type="ECO:0000255" key="2"/>
<evidence type="ECO:0000255" key="3">
    <source>
        <dbReference type="PROSITE-ProRule" id="PRU00498"/>
    </source>
</evidence>
<evidence type="ECO:0000269" key="4">
    <source>
    </source>
</evidence>
<evidence type="ECO:0000269" key="5">
    <source>
    </source>
</evidence>
<evidence type="ECO:0000269" key="6">
    <source>
    </source>
</evidence>
<evidence type="ECO:0000269" key="7">
    <source>
    </source>
</evidence>
<evidence type="ECO:0000269" key="8">
    <source>
    </source>
</evidence>
<evidence type="ECO:0000269" key="9">
    <source>
    </source>
</evidence>
<evidence type="ECO:0000269" key="10">
    <source>
    </source>
</evidence>
<evidence type="ECO:0000269" key="11">
    <source>
    </source>
</evidence>
<evidence type="ECO:0000269" key="12">
    <source>
    </source>
</evidence>
<evidence type="ECO:0000303" key="13">
    <source>
    </source>
</evidence>
<evidence type="ECO:0000303" key="14">
    <source>
    </source>
</evidence>
<evidence type="ECO:0000303" key="15">
    <source>
    </source>
</evidence>
<evidence type="ECO:0000305" key="16"/>
<evidence type="ECO:0000305" key="17">
    <source>
    </source>
</evidence>
<reference key="1">
    <citation type="journal article" date="2005" name="Nature">
        <title>Genomic sequence of the pathogenic and allergenic filamentous fungus Aspergillus fumigatus.</title>
        <authorList>
            <person name="Nierman W.C."/>
            <person name="Pain A."/>
            <person name="Anderson M.J."/>
            <person name="Wortman J.R."/>
            <person name="Kim H.S."/>
            <person name="Arroyo J."/>
            <person name="Berriman M."/>
            <person name="Abe K."/>
            <person name="Archer D.B."/>
            <person name="Bermejo C."/>
            <person name="Bennett J.W."/>
            <person name="Bowyer P."/>
            <person name="Chen D."/>
            <person name="Collins M."/>
            <person name="Coulsen R."/>
            <person name="Davies R."/>
            <person name="Dyer P.S."/>
            <person name="Farman M.L."/>
            <person name="Fedorova N."/>
            <person name="Fedorova N.D."/>
            <person name="Feldblyum T.V."/>
            <person name="Fischer R."/>
            <person name="Fosker N."/>
            <person name="Fraser A."/>
            <person name="Garcia J.L."/>
            <person name="Garcia M.J."/>
            <person name="Goble A."/>
            <person name="Goldman G.H."/>
            <person name="Gomi K."/>
            <person name="Griffith-Jones S."/>
            <person name="Gwilliam R."/>
            <person name="Haas B.J."/>
            <person name="Haas H."/>
            <person name="Harris D.E."/>
            <person name="Horiuchi H."/>
            <person name="Huang J."/>
            <person name="Humphray S."/>
            <person name="Jimenez J."/>
            <person name="Keller N."/>
            <person name="Khouri H."/>
            <person name="Kitamoto K."/>
            <person name="Kobayashi T."/>
            <person name="Konzack S."/>
            <person name="Kulkarni R."/>
            <person name="Kumagai T."/>
            <person name="Lafton A."/>
            <person name="Latge J.-P."/>
            <person name="Li W."/>
            <person name="Lord A."/>
            <person name="Lu C."/>
            <person name="Majoros W.H."/>
            <person name="May G.S."/>
            <person name="Miller B.L."/>
            <person name="Mohamoud Y."/>
            <person name="Molina M."/>
            <person name="Monod M."/>
            <person name="Mouyna I."/>
            <person name="Mulligan S."/>
            <person name="Murphy L.D."/>
            <person name="O'Neil S."/>
            <person name="Paulsen I."/>
            <person name="Penalva M.A."/>
            <person name="Pertea M."/>
            <person name="Price C."/>
            <person name="Pritchard B.L."/>
            <person name="Quail M.A."/>
            <person name="Rabbinowitsch E."/>
            <person name="Rawlins N."/>
            <person name="Rajandream M.A."/>
            <person name="Reichard U."/>
            <person name="Renauld H."/>
            <person name="Robson G.D."/>
            <person name="Rodriguez de Cordoba S."/>
            <person name="Rodriguez-Pena J.M."/>
            <person name="Ronning C.M."/>
            <person name="Rutter S."/>
            <person name="Salzberg S.L."/>
            <person name="Sanchez M."/>
            <person name="Sanchez-Ferrero J.C."/>
            <person name="Saunders D."/>
            <person name="Seeger K."/>
            <person name="Squares R."/>
            <person name="Squares S."/>
            <person name="Takeuchi M."/>
            <person name="Tekaia F."/>
            <person name="Turner G."/>
            <person name="Vazquez de Aldana C.R."/>
            <person name="Weidman J."/>
            <person name="White O."/>
            <person name="Woodward J.R."/>
            <person name="Yu J.-H."/>
            <person name="Fraser C.M."/>
            <person name="Galagan J.E."/>
            <person name="Asai K."/>
            <person name="Machida M."/>
            <person name="Hall N."/>
            <person name="Barrell B.G."/>
            <person name="Denning D.W."/>
        </authorList>
    </citation>
    <scope>NUCLEOTIDE SEQUENCE [LARGE SCALE GENOMIC DNA]</scope>
    <source>
        <strain>ATCC MYA-4609 / CBS 101355 / FGSC A1100 / Af293</strain>
    </source>
</reference>
<reference key="2">
    <citation type="journal article" date="1952" name="Science">
        <title>The treatment of amebiasis with fumagillin.</title>
        <authorList>
            <person name="Killough J.H."/>
            <person name="Magill G.B."/>
            <person name="Smith R.C."/>
        </authorList>
    </citation>
    <scope>BIOTECHNOLOGY</scope>
</reference>
<reference key="3">
    <citation type="journal article" date="1997" name="Proc. Natl. Acad. Sci. U.S.A.">
        <title>The anti-angiogenic agent fumagillin covalently binds and inhibits the methionine aminopeptidase, MetAP-2.</title>
        <authorList>
            <person name="Sin N."/>
            <person name="Meng L."/>
            <person name="Wang M.Q."/>
            <person name="Wen J.J."/>
            <person name="Bornmann W.G."/>
            <person name="Crews C.M."/>
        </authorList>
    </citation>
    <scope>BIOTECHNOLOGY</scope>
</reference>
<reference key="4">
    <citation type="journal article" date="2002" name="N. Engl. J. Med.">
        <title>Fumagillin treatment of intestinal microsporidiosis.</title>
        <authorList>
            <consortium name="Agence Nationale de Recherches sur le SIDA 090 Study Group"/>
            <person name="Molina J.M."/>
            <person name="Tourneur M."/>
            <person name="Sarfati C."/>
            <person name="Chevret S."/>
            <person name="de Gouvello A."/>
            <person name="Gobert J.G."/>
            <person name="Balkan S."/>
            <person name="Derouin F."/>
        </authorList>
    </citation>
    <scope>BIOTECHNOLOGY</scope>
</reference>
<reference key="5">
    <citation type="journal article" date="2008" name="Inflamm. Res.">
        <title>An inhibitor of methionine aminopeptidase type-2, PPI-2458, ameliorates the pathophysiological disease processes of rheumatoid arthritis.</title>
        <authorList>
            <person name="Lazarus D.D."/>
            <person name="Doyle E.G."/>
            <person name="Bernier S.G."/>
            <person name="Rogers A.B."/>
            <person name="Labenski M.T."/>
            <person name="Wakefield J.D."/>
            <person name="Karp R.M."/>
            <person name="Clark E.J."/>
            <person name="Lorusso J."/>
            <person name="Hoyt J.G."/>
            <person name="Thompson C.D."/>
            <person name="Hannig G."/>
            <person name="Westlin W.F."/>
        </authorList>
    </citation>
    <scope>BIOTECHNOLOGY</scope>
</reference>
<reference key="6">
    <citation type="journal article" date="2013" name="J. Am. Chem. Soc.">
        <title>The fumagillin biosynthetic gene cluster in Aspergillus fumigatus encodes a cryptic terpene cyclase involved in the formation of beta-trans-bergamotene.</title>
        <authorList>
            <person name="Lin H.C."/>
            <person name="Chooi Y.H."/>
            <person name="Dhingra S."/>
            <person name="Xu W."/>
            <person name="Calvo A.M."/>
            <person name="Tang Y."/>
        </authorList>
    </citation>
    <scope>FUNCTION</scope>
</reference>
<reference key="7">
    <citation type="journal article" date="2013" name="PLoS ONE">
        <title>The fumagillin gene cluster, an example of hundreds of genes under veA control in Aspergillus fumigatus.</title>
        <authorList>
            <person name="Dhingra S."/>
            <person name="Lind A.L."/>
            <person name="Lin H.C."/>
            <person name="Tang Y."/>
            <person name="Rokas A."/>
            <person name="Calvo A.M."/>
        </authorList>
    </citation>
    <scope>INDUCTION</scope>
</reference>
<reference key="8">
    <citation type="journal article" date="2013" name="Proc. Natl. Acad. Sci. U.S.A.">
        <title>Prototype of an intertwined secondary-metabolite supercluster.</title>
        <authorList>
            <person name="Wiemann P."/>
            <person name="Guo C.J."/>
            <person name="Palmer J.M."/>
            <person name="Sekonyela R."/>
            <person name="Wang C.C."/>
            <person name="Keller N.P."/>
        </authorList>
    </citation>
    <scope>IDENTIFICATION</scope>
    <scope>INDUCTION</scope>
    <scope>DISRUPTION PHENOTYPE</scope>
</reference>
<reference key="9">
    <citation type="journal article" date="2014" name="J. Am. Chem. Soc.">
        <title>Generation of complexity in fungal terpene biosynthesis: discovery of a multifunctional cytochrome P450 in the fumagillin pathway.</title>
        <authorList>
            <person name="Lin H.C."/>
            <person name="Tsunematsu Y."/>
            <person name="Dhingra S."/>
            <person name="Xu W."/>
            <person name="Fukutomi M."/>
            <person name="Chooi Y.H."/>
            <person name="Cane D.E."/>
            <person name="Calvo A.M."/>
            <person name="Watanabe K."/>
            <person name="Tang Y."/>
        </authorList>
    </citation>
    <scope>FUNCTION</scope>
    <scope>DISRUPTION PHENOTYPE</scope>
    <scope>CATALYTIC ACTIVITY</scope>
</reference>
<reference key="10">
    <citation type="journal article" date="2018" name="Virulence">
        <title>A possible role for fumagillin in cellular damage during host infection by Aspergillus fumigatus.</title>
        <authorList>
            <person name="Guruceaga X."/>
            <person name="Ezpeleta G."/>
            <person name="Mayayo E."/>
            <person name="Sueiro-Olivares M."/>
            <person name="Abad-Diaz-De-Cerio A."/>
            <person name="Aguirre Urizar J.M."/>
            <person name="Liu H.G."/>
            <person name="Wiemann P."/>
            <person name="Bok J.W."/>
            <person name="Filler S.G."/>
            <person name="Keller N.P."/>
            <person name="Hernando F.L."/>
            <person name="Ramirez-Garcia A."/>
            <person name="Rementeria A."/>
        </authorList>
    </citation>
    <scope>INDUCTION</scope>
</reference>
<name>FMAG_ASPFU</name>
<feature type="chain" id="PRO_0000437044" description="Multifunctional cytochrome P450 monooxygenase af510">
    <location>
        <begin position="1"/>
        <end position="536"/>
    </location>
</feature>
<feature type="transmembrane region" description="Helical" evidence="2">
    <location>
        <begin position="4"/>
        <end position="24"/>
    </location>
</feature>
<feature type="binding site" description="axial binding residue" evidence="1">
    <location>
        <position position="448"/>
    </location>
    <ligand>
        <name>heme</name>
        <dbReference type="ChEBI" id="CHEBI:30413"/>
    </ligand>
    <ligandPart>
        <name>Fe</name>
        <dbReference type="ChEBI" id="CHEBI:18248"/>
    </ligandPart>
</feature>
<feature type="glycosylation site" description="N-linked (GlcNAc...) asparagine" evidence="3">
    <location>
        <position position="210"/>
    </location>
</feature>
<feature type="glycosylation site" description="N-linked (GlcNAc...) asparagine" evidence="3">
    <location>
        <position position="293"/>
    </location>
</feature>
<gene>
    <name evidence="13" type="primary">af510</name>
    <name evidence="14" type="synonym">fmaG</name>
    <name type="ORF">AFUA_8G00510</name>
</gene>
<keyword id="KW-0325">Glycoprotein</keyword>
<keyword id="KW-0349">Heme</keyword>
<keyword id="KW-0408">Iron</keyword>
<keyword id="KW-0472">Membrane</keyword>
<keyword id="KW-0479">Metal-binding</keyword>
<keyword id="KW-0503">Monooxygenase</keyword>
<keyword id="KW-0560">Oxidoreductase</keyword>
<keyword id="KW-1185">Reference proteome</keyword>
<keyword id="KW-0812">Transmembrane</keyword>
<keyword id="KW-1133">Transmembrane helix</keyword>
<accession>Q4WAZ6</accession>
<proteinExistence type="evidence at protein level"/>
<organism>
    <name type="scientific">Aspergillus fumigatus (strain ATCC MYA-4609 / CBS 101355 / FGSC A1100 / Af293)</name>
    <name type="common">Neosartorya fumigata</name>
    <dbReference type="NCBI Taxonomy" id="330879"/>
    <lineage>
        <taxon>Eukaryota</taxon>
        <taxon>Fungi</taxon>
        <taxon>Dikarya</taxon>
        <taxon>Ascomycota</taxon>
        <taxon>Pezizomycotina</taxon>
        <taxon>Eurotiomycetes</taxon>
        <taxon>Eurotiomycetidae</taxon>
        <taxon>Eurotiales</taxon>
        <taxon>Aspergillaceae</taxon>
        <taxon>Aspergillus</taxon>
        <taxon>Aspergillus subgen. Fumigati</taxon>
    </lineage>
</organism>